<accession>Q8VCE2</accession>
<comment type="function">
    <text evidence="1">Small GTPase required for proper nuclear import of RNA polymerase II (RNAPII). May act at an RNAP assembly step prior to nuclear import. Forms an interface between the RNA polymerase II enzyme and chaperone/scaffolding proteins, suggesting that it is required to connect RNA polymerase II to regulators of protein complex formation. May be involved in nuclear localization of XPA.</text>
</comment>
<comment type="subunit">
    <text evidence="1">Heterodimer with GPN3. Binds to RNA polymerase II (RNAPII). Interacts directly with RNAPII subunits RPB4 and RPB7 and the CTD of RPB1. Interacts with XPA.</text>
</comment>
<comment type="subcellular location">
    <subcellularLocation>
        <location evidence="1">Cytoplasm</location>
    </subcellularLocation>
    <subcellularLocation>
        <location evidence="1">Nucleus</location>
    </subcellularLocation>
    <text evidence="1">Shuttles between the nucleus and the cytoplasm.</text>
</comment>
<comment type="similarity">
    <text evidence="4">Belongs to the GPN-loop GTPase family.</text>
</comment>
<evidence type="ECO:0000250" key="1">
    <source>
        <dbReference type="UniProtKB" id="Q9HCN4"/>
    </source>
</evidence>
<evidence type="ECO:0000250" key="2">
    <source>
        <dbReference type="UniProtKB" id="Q9UYR9"/>
    </source>
</evidence>
<evidence type="ECO:0000256" key="3">
    <source>
        <dbReference type="SAM" id="MobiDB-lite"/>
    </source>
</evidence>
<evidence type="ECO:0000305" key="4"/>
<evidence type="ECO:0007744" key="5">
    <source>
    </source>
</evidence>
<evidence type="ECO:0007744" key="6">
    <source>
    </source>
</evidence>
<proteinExistence type="evidence at protein level"/>
<protein>
    <recommendedName>
        <fullName evidence="1">GPN-loop GTPase 1</fullName>
        <ecNumber evidence="1">3.6.5.-</ecNumber>
    </recommendedName>
    <alternativeName>
        <fullName evidence="1">MBD2-interacting protein</fullName>
        <shortName evidence="1">MBDin</shortName>
    </alternativeName>
    <alternativeName>
        <fullName evidence="1">XPA-binding protein 1</fullName>
    </alternativeName>
</protein>
<gene>
    <name evidence="1" type="primary">Gpn1</name>
    <name evidence="1" type="synonym">Mbdin</name>
    <name evidence="1" type="synonym">Xab1</name>
</gene>
<reference key="1">
    <citation type="journal article" date="2005" name="Science">
        <title>The transcriptional landscape of the mammalian genome.</title>
        <authorList>
            <person name="Carninci P."/>
            <person name="Kasukawa T."/>
            <person name="Katayama S."/>
            <person name="Gough J."/>
            <person name="Frith M.C."/>
            <person name="Maeda N."/>
            <person name="Oyama R."/>
            <person name="Ravasi T."/>
            <person name="Lenhard B."/>
            <person name="Wells C."/>
            <person name="Kodzius R."/>
            <person name="Shimokawa K."/>
            <person name="Bajic V.B."/>
            <person name="Brenner S.E."/>
            <person name="Batalov S."/>
            <person name="Forrest A.R."/>
            <person name="Zavolan M."/>
            <person name="Davis M.J."/>
            <person name="Wilming L.G."/>
            <person name="Aidinis V."/>
            <person name="Allen J.E."/>
            <person name="Ambesi-Impiombato A."/>
            <person name="Apweiler R."/>
            <person name="Aturaliya R.N."/>
            <person name="Bailey T.L."/>
            <person name="Bansal M."/>
            <person name="Baxter L."/>
            <person name="Beisel K.W."/>
            <person name="Bersano T."/>
            <person name="Bono H."/>
            <person name="Chalk A.M."/>
            <person name="Chiu K.P."/>
            <person name="Choudhary V."/>
            <person name="Christoffels A."/>
            <person name="Clutterbuck D.R."/>
            <person name="Crowe M.L."/>
            <person name="Dalla E."/>
            <person name="Dalrymple B.P."/>
            <person name="de Bono B."/>
            <person name="Della Gatta G."/>
            <person name="di Bernardo D."/>
            <person name="Down T."/>
            <person name="Engstrom P."/>
            <person name="Fagiolini M."/>
            <person name="Faulkner G."/>
            <person name="Fletcher C.F."/>
            <person name="Fukushima T."/>
            <person name="Furuno M."/>
            <person name="Futaki S."/>
            <person name="Gariboldi M."/>
            <person name="Georgii-Hemming P."/>
            <person name="Gingeras T.R."/>
            <person name="Gojobori T."/>
            <person name="Green R.E."/>
            <person name="Gustincich S."/>
            <person name="Harbers M."/>
            <person name="Hayashi Y."/>
            <person name="Hensch T.K."/>
            <person name="Hirokawa N."/>
            <person name="Hill D."/>
            <person name="Huminiecki L."/>
            <person name="Iacono M."/>
            <person name="Ikeo K."/>
            <person name="Iwama A."/>
            <person name="Ishikawa T."/>
            <person name="Jakt M."/>
            <person name="Kanapin A."/>
            <person name="Katoh M."/>
            <person name="Kawasawa Y."/>
            <person name="Kelso J."/>
            <person name="Kitamura H."/>
            <person name="Kitano H."/>
            <person name="Kollias G."/>
            <person name="Krishnan S.P."/>
            <person name="Kruger A."/>
            <person name="Kummerfeld S.K."/>
            <person name="Kurochkin I.V."/>
            <person name="Lareau L.F."/>
            <person name="Lazarevic D."/>
            <person name="Lipovich L."/>
            <person name="Liu J."/>
            <person name="Liuni S."/>
            <person name="McWilliam S."/>
            <person name="Madan Babu M."/>
            <person name="Madera M."/>
            <person name="Marchionni L."/>
            <person name="Matsuda H."/>
            <person name="Matsuzawa S."/>
            <person name="Miki H."/>
            <person name="Mignone F."/>
            <person name="Miyake S."/>
            <person name="Morris K."/>
            <person name="Mottagui-Tabar S."/>
            <person name="Mulder N."/>
            <person name="Nakano N."/>
            <person name="Nakauchi H."/>
            <person name="Ng P."/>
            <person name="Nilsson R."/>
            <person name="Nishiguchi S."/>
            <person name="Nishikawa S."/>
            <person name="Nori F."/>
            <person name="Ohara O."/>
            <person name="Okazaki Y."/>
            <person name="Orlando V."/>
            <person name="Pang K.C."/>
            <person name="Pavan W.J."/>
            <person name="Pavesi G."/>
            <person name="Pesole G."/>
            <person name="Petrovsky N."/>
            <person name="Piazza S."/>
            <person name="Reed J."/>
            <person name="Reid J.F."/>
            <person name="Ring B.Z."/>
            <person name="Ringwald M."/>
            <person name="Rost B."/>
            <person name="Ruan Y."/>
            <person name="Salzberg S.L."/>
            <person name="Sandelin A."/>
            <person name="Schneider C."/>
            <person name="Schoenbach C."/>
            <person name="Sekiguchi K."/>
            <person name="Semple C.A."/>
            <person name="Seno S."/>
            <person name="Sessa L."/>
            <person name="Sheng Y."/>
            <person name="Shibata Y."/>
            <person name="Shimada H."/>
            <person name="Shimada K."/>
            <person name="Silva D."/>
            <person name="Sinclair B."/>
            <person name="Sperling S."/>
            <person name="Stupka E."/>
            <person name="Sugiura K."/>
            <person name="Sultana R."/>
            <person name="Takenaka Y."/>
            <person name="Taki K."/>
            <person name="Tammoja K."/>
            <person name="Tan S.L."/>
            <person name="Tang S."/>
            <person name="Taylor M.S."/>
            <person name="Tegner J."/>
            <person name="Teichmann S.A."/>
            <person name="Ueda H.R."/>
            <person name="van Nimwegen E."/>
            <person name="Verardo R."/>
            <person name="Wei C.L."/>
            <person name="Yagi K."/>
            <person name="Yamanishi H."/>
            <person name="Zabarovsky E."/>
            <person name="Zhu S."/>
            <person name="Zimmer A."/>
            <person name="Hide W."/>
            <person name="Bult C."/>
            <person name="Grimmond S.M."/>
            <person name="Teasdale R.D."/>
            <person name="Liu E.T."/>
            <person name="Brusic V."/>
            <person name="Quackenbush J."/>
            <person name="Wahlestedt C."/>
            <person name="Mattick J.S."/>
            <person name="Hume D.A."/>
            <person name="Kai C."/>
            <person name="Sasaki D."/>
            <person name="Tomaru Y."/>
            <person name="Fukuda S."/>
            <person name="Kanamori-Katayama M."/>
            <person name="Suzuki M."/>
            <person name="Aoki J."/>
            <person name="Arakawa T."/>
            <person name="Iida J."/>
            <person name="Imamura K."/>
            <person name="Itoh M."/>
            <person name="Kato T."/>
            <person name="Kawaji H."/>
            <person name="Kawagashira N."/>
            <person name="Kawashima T."/>
            <person name="Kojima M."/>
            <person name="Kondo S."/>
            <person name="Konno H."/>
            <person name="Nakano K."/>
            <person name="Ninomiya N."/>
            <person name="Nishio T."/>
            <person name="Okada M."/>
            <person name="Plessy C."/>
            <person name="Shibata K."/>
            <person name="Shiraki T."/>
            <person name="Suzuki S."/>
            <person name="Tagami M."/>
            <person name="Waki K."/>
            <person name="Watahiki A."/>
            <person name="Okamura-Oho Y."/>
            <person name="Suzuki H."/>
            <person name="Kawai J."/>
            <person name="Hayashizaki Y."/>
        </authorList>
    </citation>
    <scope>NUCLEOTIDE SEQUENCE [LARGE SCALE MRNA]</scope>
    <source>
        <strain>C57BL/6J</strain>
    </source>
</reference>
<reference key="2">
    <citation type="journal article" date="2004" name="Genome Res.">
        <title>The status, quality, and expansion of the NIH full-length cDNA project: the Mammalian Gene Collection (MGC).</title>
        <authorList>
            <consortium name="The MGC Project Team"/>
        </authorList>
    </citation>
    <scope>NUCLEOTIDE SEQUENCE [LARGE SCALE MRNA]</scope>
    <source>
        <tissue>Retina</tissue>
    </source>
</reference>
<reference key="3">
    <citation type="journal article" date="2007" name="Proc. Natl. Acad. Sci. U.S.A.">
        <title>Large-scale phosphorylation analysis of mouse liver.</title>
        <authorList>
            <person name="Villen J."/>
            <person name="Beausoleil S.A."/>
            <person name="Gerber S.A."/>
            <person name="Gygi S.P."/>
        </authorList>
    </citation>
    <scope>PHOSPHORYLATION [LARGE SCALE ANALYSIS] AT SER-314</scope>
    <scope>IDENTIFICATION BY MASS SPECTROMETRY [LARGE SCALE ANALYSIS]</scope>
    <source>
        <tissue>Liver</tissue>
    </source>
</reference>
<reference key="4">
    <citation type="journal article" date="2010" name="Cell">
        <title>A tissue-specific atlas of mouse protein phosphorylation and expression.</title>
        <authorList>
            <person name="Huttlin E.L."/>
            <person name="Jedrychowski M.P."/>
            <person name="Elias J.E."/>
            <person name="Goswami T."/>
            <person name="Rad R."/>
            <person name="Beausoleil S.A."/>
            <person name="Villen J."/>
            <person name="Haas W."/>
            <person name="Sowa M.E."/>
            <person name="Gygi S.P."/>
        </authorList>
    </citation>
    <scope>PHOSPHORYLATION [LARGE SCALE ANALYSIS] AT SER-314 AND SER-338</scope>
    <scope>IDENTIFICATION BY MASS SPECTROMETRY [LARGE SCALE ANALYSIS]</scope>
    <source>
        <tissue>Brain</tissue>
        <tissue>Brown adipose tissue</tissue>
        <tissue>Kidney</tissue>
        <tissue>Liver</tissue>
        <tissue>Lung</tissue>
        <tissue>Spleen</tissue>
        <tissue>Testis</tissue>
    </source>
</reference>
<keyword id="KW-0007">Acetylation</keyword>
<keyword id="KW-0963">Cytoplasm</keyword>
<keyword id="KW-0342">GTP-binding</keyword>
<keyword id="KW-0378">Hydrolase</keyword>
<keyword id="KW-0547">Nucleotide-binding</keyword>
<keyword id="KW-0539">Nucleus</keyword>
<keyword id="KW-0597">Phosphoprotein</keyword>
<keyword id="KW-1185">Reference proteome</keyword>
<dbReference type="EC" id="3.6.5.-" evidence="1"/>
<dbReference type="EMBL" id="AK077645">
    <property type="protein sequence ID" value="BAC36923.1"/>
    <property type="molecule type" value="mRNA"/>
</dbReference>
<dbReference type="EMBL" id="BC020174">
    <property type="protein sequence ID" value="AAH20174.1"/>
    <property type="molecule type" value="mRNA"/>
</dbReference>
<dbReference type="CCDS" id="CCDS19185.1"/>
<dbReference type="RefSeq" id="NP_598517.1">
    <property type="nucleotide sequence ID" value="NM_133756.6"/>
</dbReference>
<dbReference type="SMR" id="Q8VCE2"/>
<dbReference type="BioGRID" id="216610">
    <property type="interactions" value="1"/>
</dbReference>
<dbReference type="FunCoup" id="Q8VCE2">
    <property type="interactions" value="4438"/>
</dbReference>
<dbReference type="IntAct" id="Q8VCE2">
    <property type="interactions" value="3"/>
</dbReference>
<dbReference type="STRING" id="10090.ENSMUSP00000076217"/>
<dbReference type="GlyGen" id="Q8VCE2">
    <property type="glycosylation" value="1 site, 1 N-linked glycan (1 site)"/>
</dbReference>
<dbReference type="iPTMnet" id="Q8VCE2"/>
<dbReference type="PhosphoSitePlus" id="Q8VCE2"/>
<dbReference type="jPOST" id="Q8VCE2"/>
<dbReference type="PaxDb" id="10090-ENSMUSP00000076217"/>
<dbReference type="ProteomicsDB" id="271318"/>
<dbReference type="Pumba" id="Q8VCE2"/>
<dbReference type="Antibodypedia" id="13832">
    <property type="antibodies" value="205 antibodies from 29 providers"/>
</dbReference>
<dbReference type="DNASU" id="74254"/>
<dbReference type="Ensembl" id="ENSMUST00000076949.13">
    <property type="protein sequence ID" value="ENSMUSP00000076217.7"/>
    <property type="gene ID" value="ENSMUSG00000064037.14"/>
</dbReference>
<dbReference type="GeneID" id="74254"/>
<dbReference type="KEGG" id="mmu:74254"/>
<dbReference type="UCSC" id="uc008wyi.1">
    <property type="organism name" value="mouse"/>
</dbReference>
<dbReference type="AGR" id="MGI:1921504"/>
<dbReference type="CTD" id="11321"/>
<dbReference type="MGI" id="MGI:1921504">
    <property type="gene designation" value="Gpn1"/>
</dbReference>
<dbReference type="VEuPathDB" id="HostDB:ENSMUSG00000064037"/>
<dbReference type="eggNOG" id="KOG1532">
    <property type="taxonomic scope" value="Eukaryota"/>
</dbReference>
<dbReference type="GeneTree" id="ENSGT00950000183172"/>
<dbReference type="HOGENOM" id="CLU_037460_1_2_1"/>
<dbReference type="InParanoid" id="Q8VCE2"/>
<dbReference type="OMA" id="MIIVFNK"/>
<dbReference type="OrthoDB" id="243313at2759"/>
<dbReference type="PhylomeDB" id="Q8VCE2"/>
<dbReference type="TreeFam" id="TF313204"/>
<dbReference type="BioGRID-ORCS" id="74254">
    <property type="hits" value="24 hits in 76 CRISPR screens"/>
</dbReference>
<dbReference type="ChiTaRS" id="Gpn1">
    <property type="organism name" value="mouse"/>
</dbReference>
<dbReference type="PRO" id="PR:Q8VCE2"/>
<dbReference type="Proteomes" id="UP000000589">
    <property type="component" value="Chromosome 5"/>
</dbReference>
<dbReference type="RNAct" id="Q8VCE2">
    <property type="molecule type" value="protein"/>
</dbReference>
<dbReference type="Bgee" id="ENSMUSG00000064037">
    <property type="expression patterns" value="Expressed in ileal epithelium and 257 other cell types or tissues"/>
</dbReference>
<dbReference type="ExpressionAtlas" id="Q8VCE2">
    <property type="expression patterns" value="baseline and differential"/>
</dbReference>
<dbReference type="GO" id="GO:0005829">
    <property type="term" value="C:cytosol"/>
    <property type="evidence" value="ECO:0007669"/>
    <property type="project" value="Ensembl"/>
</dbReference>
<dbReference type="GO" id="GO:0005739">
    <property type="term" value="C:mitochondrion"/>
    <property type="evidence" value="ECO:0007669"/>
    <property type="project" value="Ensembl"/>
</dbReference>
<dbReference type="GO" id="GO:0005654">
    <property type="term" value="C:nucleoplasm"/>
    <property type="evidence" value="ECO:0007669"/>
    <property type="project" value="Ensembl"/>
</dbReference>
<dbReference type="GO" id="GO:0016887">
    <property type="term" value="F:ATP hydrolysis activity"/>
    <property type="evidence" value="ECO:0007669"/>
    <property type="project" value="InterPro"/>
</dbReference>
<dbReference type="GO" id="GO:0005525">
    <property type="term" value="F:GTP binding"/>
    <property type="evidence" value="ECO:0007669"/>
    <property type="project" value="UniProtKB-KW"/>
</dbReference>
<dbReference type="GO" id="GO:0003924">
    <property type="term" value="F:GTPase activity"/>
    <property type="evidence" value="ECO:0007669"/>
    <property type="project" value="InterPro"/>
</dbReference>
<dbReference type="CDD" id="cd17870">
    <property type="entry name" value="GPN1"/>
    <property type="match status" value="1"/>
</dbReference>
<dbReference type="FunFam" id="3.40.50.300:FF:000696">
    <property type="entry name" value="GPN-loop GTPase"/>
    <property type="match status" value="1"/>
</dbReference>
<dbReference type="Gene3D" id="3.40.50.300">
    <property type="entry name" value="P-loop containing nucleotide triphosphate hydrolases"/>
    <property type="match status" value="1"/>
</dbReference>
<dbReference type="InterPro" id="IPR003593">
    <property type="entry name" value="AAA+_ATPase"/>
</dbReference>
<dbReference type="InterPro" id="IPR004130">
    <property type="entry name" value="Gpn"/>
</dbReference>
<dbReference type="InterPro" id="IPR030230">
    <property type="entry name" value="Gpn1/Npa3/XAB1"/>
</dbReference>
<dbReference type="InterPro" id="IPR027417">
    <property type="entry name" value="P-loop_NTPase"/>
</dbReference>
<dbReference type="PANTHER" id="PTHR21231:SF8">
    <property type="entry name" value="GPN-LOOP GTPASE 1"/>
    <property type="match status" value="1"/>
</dbReference>
<dbReference type="PANTHER" id="PTHR21231">
    <property type="entry name" value="XPA-BINDING PROTEIN 1-RELATED"/>
    <property type="match status" value="1"/>
</dbReference>
<dbReference type="Pfam" id="PF03029">
    <property type="entry name" value="ATP_bind_1"/>
    <property type="match status" value="1"/>
</dbReference>
<dbReference type="SMART" id="SM00382">
    <property type="entry name" value="AAA"/>
    <property type="match status" value="1"/>
</dbReference>
<dbReference type="SUPFAM" id="SSF52540">
    <property type="entry name" value="P-loop containing nucleoside triphosphate hydrolases"/>
    <property type="match status" value="1"/>
</dbReference>
<organism>
    <name type="scientific">Mus musculus</name>
    <name type="common">Mouse</name>
    <dbReference type="NCBI Taxonomy" id="10090"/>
    <lineage>
        <taxon>Eukaryota</taxon>
        <taxon>Metazoa</taxon>
        <taxon>Chordata</taxon>
        <taxon>Craniata</taxon>
        <taxon>Vertebrata</taxon>
        <taxon>Euteleostomi</taxon>
        <taxon>Mammalia</taxon>
        <taxon>Eutheria</taxon>
        <taxon>Euarchontoglires</taxon>
        <taxon>Glires</taxon>
        <taxon>Rodentia</taxon>
        <taxon>Myomorpha</taxon>
        <taxon>Muroidea</taxon>
        <taxon>Muridae</taxon>
        <taxon>Murinae</taxon>
        <taxon>Mus</taxon>
        <taxon>Mus</taxon>
    </lineage>
</organism>
<name>GPN1_MOUSE</name>
<sequence length="372" mass="41598">MAAPVAPSEPQASRAPQPPVCLLVLGMAGSGKTTFVQRLTGHLHNKGCPPYVINLDPAVHEVPFPANIDIRDTVKYKEVMKQYGLGPNGGIVTSLNLFATRFDQVMKFIEKAQNTFRYVLIDTPGQIEVFTWSASGTIITEALASSFPTVVIYVMDTSRSTNPVTFMSNMLYACSILYKTKLPFIVVMNKTDIIDHSFAVEWMQDFEAFQDALNQETTYVSNLTRSMSLVLDEFYSSLRVVGVSAVVGTGFDELCTQVTSAAEEYEREYRPEYERLKKSLANAQSNQQKEQLERLRKDMGSVALDPEAGKGNASPVLDPSDLILTRGTLDEEDEEADSDTDDIDHRVTEESREEPAFQNFMEESMAHWKRNK</sequence>
<feature type="initiator methionine" description="Removed" evidence="1">
    <location>
        <position position="1"/>
    </location>
</feature>
<feature type="chain" id="PRO_0000066002" description="GPN-loop GTPase 1">
    <location>
        <begin position="2"/>
        <end position="372"/>
    </location>
</feature>
<feature type="region of interest" description="Disordered" evidence="3">
    <location>
        <begin position="303"/>
        <end position="372"/>
    </location>
</feature>
<feature type="short sequence motif" description="Gly-Pro-Asn (GPN)-loop; involved in dimer interface" evidence="2">
    <location>
        <begin position="86"/>
        <end position="88"/>
    </location>
</feature>
<feature type="compositionally biased region" description="Acidic residues" evidence="3">
    <location>
        <begin position="330"/>
        <end position="342"/>
    </location>
</feature>
<feature type="compositionally biased region" description="Basic and acidic residues" evidence="3">
    <location>
        <begin position="343"/>
        <end position="355"/>
    </location>
</feature>
<feature type="binding site" evidence="2">
    <location>
        <begin position="29"/>
        <end position="34"/>
    </location>
    <ligand>
        <name>GTP</name>
        <dbReference type="ChEBI" id="CHEBI:37565"/>
    </ligand>
</feature>
<feature type="binding site" evidence="2">
    <location>
        <begin position="189"/>
        <end position="192"/>
    </location>
    <ligand>
        <name>GTP</name>
        <dbReference type="ChEBI" id="CHEBI:37565"/>
    </ligand>
</feature>
<feature type="site" description="Stabilizes the phosphate intermediate; shared with dimeric partner" evidence="2">
    <location>
        <position position="88"/>
    </location>
</feature>
<feature type="modified residue" description="N-acetylalanine" evidence="1">
    <location>
        <position position="2"/>
    </location>
</feature>
<feature type="modified residue" description="Phosphoserine" evidence="1">
    <location>
        <position position="301"/>
    </location>
</feature>
<feature type="modified residue" description="Phosphoserine" evidence="5 6">
    <location>
        <position position="314"/>
    </location>
</feature>
<feature type="modified residue" description="Phosphothreonine" evidence="1">
    <location>
        <position position="328"/>
    </location>
</feature>
<feature type="modified residue" description="Phosphoserine" evidence="6">
    <location>
        <position position="338"/>
    </location>
</feature>
<feature type="modified residue" description="Phosphothreonine" evidence="1">
    <location>
        <position position="340"/>
    </location>
</feature>